<sequence length="117" mass="14162">MTRIKRGYIARRRRTKLRLFASSFRGAHSRLTRTMTQQRIRALVSAHRDRGKRKRDFRRLWITRINAVIHEMGVFYSYNQFIHNLYKKQLLLNRKILAQIALLNRSCLYTISNDIKK</sequence>
<evidence type="ECO:0000255" key="1">
    <source>
        <dbReference type="HAMAP-Rule" id="MF_00382"/>
    </source>
</evidence>
<evidence type="ECO:0000305" key="2"/>
<gene>
    <name evidence="1" type="primary">rpl20</name>
</gene>
<proteinExistence type="inferred from homology"/>
<name>RK20_OLIPU</name>
<keyword id="KW-0150">Chloroplast</keyword>
<keyword id="KW-0934">Plastid</keyword>
<keyword id="KW-0687">Ribonucleoprotein</keyword>
<keyword id="KW-0689">Ribosomal protein</keyword>
<keyword id="KW-0694">RNA-binding</keyword>
<keyword id="KW-0699">rRNA-binding</keyword>
<reference key="1">
    <citation type="submission" date="2007-03" db="EMBL/GenBank/DDBJ databases">
        <title>Sequence analysis of Arabidopsis pumila JS2 chloroplast DNA.</title>
        <authorList>
            <person name="Hosouchi T."/>
            <person name="Tsuruoka H."/>
            <person name="Kotani H."/>
        </authorList>
    </citation>
    <scope>NUCLEOTIDE SEQUENCE [LARGE SCALE GENOMIC DNA]</scope>
</reference>
<comment type="function">
    <text evidence="1">Binds directly to 23S ribosomal RNA and is necessary for the in vitro assembly process of the 50S ribosomal subunit. It is not involved in the protein synthesizing functions of that subunit.</text>
</comment>
<comment type="subcellular location">
    <subcellularLocation>
        <location>Plastid</location>
        <location>Chloroplast</location>
    </subcellularLocation>
</comment>
<comment type="similarity">
    <text evidence="1">Belongs to the bacterial ribosomal protein bL20 family.</text>
</comment>
<protein>
    <recommendedName>
        <fullName evidence="1">Large ribosomal subunit protein bL20c</fullName>
    </recommendedName>
    <alternativeName>
        <fullName evidence="2">50S ribosomal protein L20, chloroplastic</fullName>
    </alternativeName>
</protein>
<accession>A4QJV4</accession>
<organism>
    <name type="scientific">Olimarabidopsis pumila</name>
    <name type="common">Dwarf rocket</name>
    <name type="synonym">Arabidopsis griffithiana</name>
    <dbReference type="NCBI Taxonomy" id="74718"/>
    <lineage>
        <taxon>Eukaryota</taxon>
        <taxon>Viridiplantae</taxon>
        <taxon>Streptophyta</taxon>
        <taxon>Embryophyta</taxon>
        <taxon>Tracheophyta</taxon>
        <taxon>Spermatophyta</taxon>
        <taxon>Magnoliopsida</taxon>
        <taxon>eudicotyledons</taxon>
        <taxon>Gunneridae</taxon>
        <taxon>Pentapetalae</taxon>
        <taxon>rosids</taxon>
        <taxon>malvids</taxon>
        <taxon>Brassicales</taxon>
        <taxon>Brassicaceae</taxon>
        <taxon>Alyssopsideae</taxon>
        <taxon>Olimarabidopsis</taxon>
    </lineage>
</organism>
<geneLocation type="chloroplast"/>
<dbReference type="EMBL" id="AP009368">
    <property type="protein sequence ID" value="BAF49962.1"/>
    <property type="molecule type" value="Genomic_DNA"/>
</dbReference>
<dbReference type="RefSeq" id="YP_001123138.1">
    <property type="nucleotide sequence ID" value="NC_009267.1"/>
</dbReference>
<dbReference type="SMR" id="A4QJV4"/>
<dbReference type="GeneID" id="4962466"/>
<dbReference type="GO" id="GO:0009507">
    <property type="term" value="C:chloroplast"/>
    <property type="evidence" value="ECO:0007669"/>
    <property type="project" value="UniProtKB-SubCell"/>
</dbReference>
<dbReference type="GO" id="GO:1990904">
    <property type="term" value="C:ribonucleoprotein complex"/>
    <property type="evidence" value="ECO:0007669"/>
    <property type="project" value="UniProtKB-KW"/>
</dbReference>
<dbReference type="GO" id="GO:0005840">
    <property type="term" value="C:ribosome"/>
    <property type="evidence" value="ECO:0007669"/>
    <property type="project" value="UniProtKB-KW"/>
</dbReference>
<dbReference type="GO" id="GO:0019843">
    <property type="term" value="F:rRNA binding"/>
    <property type="evidence" value="ECO:0007669"/>
    <property type="project" value="UniProtKB-UniRule"/>
</dbReference>
<dbReference type="GO" id="GO:0003735">
    <property type="term" value="F:structural constituent of ribosome"/>
    <property type="evidence" value="ECO:0007669"/>
    <property type="project" value="InterPro"/>
</dbReference>
<dbReference type="GO" id="GO:0000027">
    <property type="term" value="P:ribosomal large subunit assembly"/>
    <property type="evidence" value="ECO:0007669"/>
    <property type="project" value="UniProtKB-UniRule"/>
</dbReference>
<dbReference type="GO" id="GO:0006412">
    <property type="term" value="P:translation"/>
    <property type="evidence" value="ECO:0007669"/>
    <property type="project" value="InterPro"/>
</dbReference>
<dbReference type="CDD" id="cd07026">
    <property type="entry name" value="Ribosomal_L20"/>
    <property type="match status" value="1"/>
</dbReference>
<dbReference type="FunFam" id="1.10.1900.20:FF:000001">
    <property type="entry name" value="50S ribosomal protein L20"/>
    <property type="match status" value="1"/>
</dbReference>
<dbReference type="Gene3D" id="6.10.160.10">
    <property type="match status" value="1"/>
</dbReference>
<dbReference type="Gene3D" id="1.10.1900.20">
    <property type="entry name" value="Ribosomal protein L20"/>
    <property type="match status" value="1"/>
</dbReference>
<dbReference type="HAMAP" id="MF_00382">
    <property type="entry name" value="Ribosomal_bL20"/>
    <property type="match status" value="1"/>
</dbReference>
<dbReference type="InterPro" id="IPR005813">
    <property type="entry name" value="Ribosomal_bL20"/>
</dbReference>
<dbReference type="InterPro" id="IPR049946">
    <property type="entry name" value="RIBOSOMAL_L20_CS"/>
</dbReference>
<dbReference type="InterPro" id="IPR035566">
    <property type="entry name" value="Ribosomal_protein_bL20_C"/>
</dbReference>
<dbReference type="NCBIfam" id="TIGR01032">
    <property type="entry name" value="rplT_bact"/>
    <property type="match status" value="1"/>
</dbReference>
<dbReference type="PANTHER" id="PTHR10986">
    <property type="entry name" value="39S RIBOSOMAL PROTEIN L20"/>
    <property type="match status" value="1"/>
</dbReference>
<dbReference type="Pfam" id="PF00453">
    <property type="entry name" value="Ribosomal_L20"/>
    <property type="match status" value="1"/>
</dbReference>
<dbReference type="PRINTS" id="PR00062">
    <property type="entry name" value="RIBOSOMALL20"/>
</dbReference>
<dbReference type="SUPFAM" id="SSF74731">
    <property type="entry name" value="Ribosomal protein L20"/>
    <property type="match status" value="1"/>
</dbReference>
<dbReference type="PROSITE" id="PS00937">
    <property type="entry name" value="RIBOSOMAL_L20"/>
    <property type="match status" value="1"/>
</dbReference>
<feature type="chain" id="PRO_0000355522" description="Large ribosomal subunit protein bL20c">
    <location>
        <begin position="1"/>
        <end position="117"/>
    </location>
</feature>